<proteinExistence type="inferred from homology"/>
<comment type="function">
    <text evidence="1">Allows the formation of correctly charged Gln-tRNA(Gln) through the transamidation of misacylated Glu-tRNA(Gln) in organisms which lack glutaminyl-tRNA synthetase. The reaction takes place in the presence of glutamine and ATP through an activated gamma-phospho-Glu-tRNA(Gln).</text>
</comment>
<comment type="catalytic activity">
    <reaction evidence="1">
        <text>L-glutamyl-tRNA(Gln) + L-glutamine + ATP + H2O = L-glutaminyl-tRNA(Gln) + L-glutamate + ADP + phosphate + H(+)</text>
        <dbReference type="Rhea" id="RHEA:17521"/>
        <dbReference type="Rhea" id="RHEA-COMP:9681"/>
        <dbReference type="Rhea" id="RHEA-COMP:9684"/>
        <dbReference type="ChEBI" id="CHEBI:15377"/>
        <dbReference type="ChEBI" id="CHEBI:15378"/>
        <dbReference type="ChEBI" id="CHEBI:29985"/>
        <dbReference type="ChEBI" id="CHEBI:30616"/>
        <dbReference type="ChEBI" id="CHEBI:43474"/>
        <dbReference type="ChEBI" id="CHEBI:58359"/>
        <dbReference type="ChEBI" id="CHEBI:78520"/>
        <dbReference type="ChEBI" id="CHEBI:78521"/>
        <dbReference type="ChEBI" id="CHEBI:456216"/>
        <dbReference type="EC" id="6.3.5.7"/>
    </reaction>
</comment>
<comment type="subunit">
    <text evidence="1">Heterotrimer of A, B and C subunits.</text>
</comment>
<comment type="similarity">
    <text evidence="1">Belongs to the amidase family. GatA subfamily.</text>
</comment>
<dbReference type="EC" id="6.3.5.7" evidence="1"/>
<dbReference type="EMBL" id="CP000352">
    <property type="protein sequence ID" value="ABF06935.1"/>
    <property type="molecule type" value="Genomic_DNA"/>
</dbReference>
<dbReference type="RefSeq" id="WP_011514976.1">
    <property type="nucleotide sequence ID" value="NC_007973.1"/>
</dbReference>
<dbReference type="SMR" id="Q1LSE1"/>
<dbReference type="STRING" id="266264.Rmet_0049"/>
<dbReference type="KEGG" id="rme:Rmet_0049"/>
<dbReference type="eggNOG" id="COG0154">
    <property type="taxonomic scope" value="Bacteria"/>
</dbReference>
<dbReference type="HOGENOM" id="CLU_009600_0_3_4"/>
<dbReference type="Proteomes" id="UP000002429">
    <property type="component" value="Chromosome"/>
</dbReference>
<dbReference type="GO" id="GO:0030956">
    <property type="term" value="C:glutamyl-tRNA(Gln) amidotransferase complex"/>
    <property type="evidence" value="ECO:0007669"/>
    <property type="project" value="InterPro"/>
</dbReference>
<dbReference type="GO" id="GO:0005524">
    <property type="term" value="F:ATP binding"/>
    <property type="evidence" value="ECO:0007669"/>
    <property type="project" value="UniProtKB-KW"/>
</dbReference>
<dbReference type="GO" id="GO:0050567">
    <property type="term" value="F:glutaminyl-tRNA synthase (glutamine-hydrolyzing) activity"/>
    <property type="evidence" value="ECO:0007669"/>
    <property type="project" value="UniProtKB-UniRule"/>
</dbReference>
<dbReference type="GO" id="GO:0006412">
    <property type="term" value="P:translation"/>
    <property type="evidence" value="ECO:0007669"/>
    <property type="project" value="UniProtKB-UniRule"/>
</dbReference>
<dbReference type="Gene3D" id="3.90.1300.10">
    <property type="entry name" value="Amidase signature (AS) domain"/>
    <property type="match status" value="1"/>
</dbReference>
<dbReference type="HAMAP" id="MF_00120">
    <property type="entry name" value="GatA"/>
    <property type="match status" value="1"/>
</dbReference>
<dbReference type="InterPro" id="IPR000120">
    <property type="entry name" value="Amidase"/>
</dbReference>
<dbReference type="InterPro" id="IPR020556">
    <property type="entry name" value="Amidase_CS"/>
</dbReference>
<dbReference type="InterPro" id="IPR023631">
    <property type="entry name" value="Amidase_dom"/>
</dbReference>
<dbReference type="InterPro" id="IPR036928">
    <property type="entry name" value="AS_sf"/>
</dbReference>
<dbReference type="InterPro" id="IPR004412">
    <property type="entry name" value="GatA"/>
</dbReference>
<dbReference type="InterPro" id="IPR006594">
    <property type="entry name" value="LisH"/>
</dbReference>
<dbReference type="NCBIfam" id="TIGR00132">
    <property type="entry name" value="gatA"/>
    <property type="match status" value="1"/>
</dbReference>
<dbReference type="PANTHER" id="PTHR11895:SF151">
    <property type="entry name" value="GLUTAMYL-TRNA(GLN) AMIDOTRANSFERASE SUBUNIT A"/>
    <property type="match status" value="1"/>
</dbReference>
<dbReference type="PANTHER" id="PTHR11895">
    <property type="entry name" value="TRANSAMIDASE"/>
    <property type="match status" value="1"/>
</dbReference>
<dbReference type="Pfam" id="PF01425">
    <property type="entry name" value="Amidase"/>
    <property type="match status" value="1"/>
</dbReference>
<dbReference type="SUPFAM" id="SSF75304">
    <property type="entry name" value="Amidase signature (AS) enzymes"/>
    <property type="match status" value="1"/>
</dbReference>
<dbReference type="PROSITE" id="PS00571">
    <property type="entry name" value="AMIDASES"/>
    <property type="match status" value="1"/>
</dbReference>
<name>GATA_CUPMC</name>
<accession>Q1LSE1</accession>
<feature type="chain" id="PRO_1000015891" description="Glutamyl-tRNA(Gln) amidotransferase subunit A">
    <location>
        <begin position="1"/>
        <end position="499"/>
    </location>
</feature>
<feature type="active site" description="Charge relay system" evidence="1">
    <location>
        <position position="80"/>
    </location>
</feature>
<feature type="active site" description="Charge relay system" evidence="1">
    <location>
        <position position="155"/>
    </location>
</feature>
<feature type="active site" description="Acyl-ester intermediate" evidence="1">
    <location>
        <position position="179"/>
    </location>
</feature>
<keyword id="KW-0067">ATP-binding</keyword>
<keyword id="KW-0436">Ligase</keyword>
<keyword id="KW-0547">Nucleotide-binding</keyword>
<keyword id="KW-0648">Protein biosynthesis</keyword>
<keyword id="KW-1185">Reference proteome</keyword>
<gene>
    <name evidence="1" type="primary">gatA</name>
    <name type="ordered locus">Rmet_0049</name>
</gene>
<organism>
    <name type="scientific">Cupriavidus metallidurans (strain ATCC 43123 / DSM 2839 / NBRC 102507 / CH34)</name>
    <name type="common">Ralstonia metallidurans</name>
    <dbReference type="NCBI Taxonomy" id="266264"/>
    <lineage>
        <taxon>Bacteria</taxon>
        <taxon>Pseudomonadati</taxon>
        <taxon>Pseudomonadota</taxon>
        <taxon>Betaproteobacteria</taxon>
        <taxon>Burkholderiales</taxon>
        <taxon>Burkholderiaceae</taxon>
        <taxon>Cupriavidus</taxon>
    </lineage>
</organism>
<reference key="1">
    <citation type="journal article" date="2010" name="PLoS ONE">
        <title>The complete genome sequence of Cupriavidus metallidurans strain CH34, a master survivalist in harsh and anthropogenic environments.</title>
        <authorList>
            <person name="Janssen P.J."/>
            <person name="Van Houdt R."/>
            <person name="Moors H."/>
            <person name="Monsieurs P."/>
            <person name="Morin N."/>
            <person name="Michaux A."/>
            <person name="Benotmane M.A."/>
            <person name="Leys N."/>
            <person name="Vallaeys T."/>
            <person name="Lapidus A."/>
            <person name="Monchy S."/>
            <person name="Medigue C."/>
            <person name="Taghavi S."/>
            <person name="McCorkle S."/>
            <person name="Dunn J."/>
            <person name="van der Lelie D."/>
            <person name="Mergeay M."/>
        </authorList>
    </citation>
    <scope>NUCLEOTIDE SEQUENCE [LARGE SCALE GENOMIC DNA]</scope>
    <source>
        <strain>ATCC 43123 / DSM 2839 / NBRC 102507 / CH34</strain>
    </source>
</reference>
<evidence type="ECO:0000255" key="1">
    <source>
        <dbReference type="HAMAP-Rule" id="MF_00120"/>
    </source>
</evidence>
<protein>
    <recommendedName>
        <fullName evidence="1">Glutamyl-tRNA(Gln) amidotransferase subunit A</fullName>
        <shortName evidence="1">Glu-ADT subunit A</shortName>
        <ecNumber evidence="1">6.3.5.7</ecNumber>
    </recommendedName>
</protein>
<sequence length="499" mass="53022">MPFSADSVTSLRQIADALAARSVSAEELAREYLARIEAGRALNAFVAVDPELTLAQARAADERRAQGQATPLTGVPIAHKDVFVTRGWKSTAGSKMLANYESPFDATVVERLAAAGMVTLGKTNMDEFAMGSSNENSFFGPVSNPWDTSRVPGGSSGGSAAAVAAGLAPAATGTDTGGSIRQPASFSGITGIKPTYGRVSRYGMIAFASSLDQGGPMAHSAEDCALLLNGMAGFDPKDSTSLTPELGGVTEDFTRLLGQPRAGATASQPLAGLRIGLPREYFGKGLSADVEQALRAALAEYEKLGATLVDVTLPKTELSIPVYYIIAPAEASSNLSRFDGVRYGHRAAQYGDLLDMYKKSRAEGFGPEVKRRIMVGTYVLSHGYYDAYYLQAQKIRRIIADDFQRAFTQCDVIMGPVAPTVAWKLGEKTADPVQMYLADIFTLSTSLAGLPGMSVPCGFGEGNMPVGLQLIGNYFDEAQLLQTAHAFQQATDWHLRRPA</sequence>